<name>PLSY_ACTSZ</name>
<keyword id="KW-0997">Cell inner membrane</keyword>
<keyword id="KW-1003">Cell membrane</keyword>
<keyword id="KW-0444">Lipid biosynthesis</keyword>
<keyword id="KW-0443">Lipid metabolism</keyword>
<keyword id="KW-0472">Membrane</keyword>
<keyword id="KW-0594">Phospholipid biosynthesis</keyword>
<keyword id="KW-1208">Phospholipid metabolism</keyword>
<keyword id="KW-1185">Reference proteome</keyword>
<keyword id="KW-0808">Transferase</keyword>
<keyword id="KW-0812">Transmembrane</keyword>
<keyword id="KW-1133">Transmembrane helix</keyword>
<feature type="chain" id="PRO_1000084374" description="Glycerol-3-phosphate acyltransferase">
    <location>
        <begin position="1"/>
        <end position="200"/>
    </location>
</feature>
<feature type="transmembrane region" description="Helical" evidence="1">
    <location>
        <begin position="4"/>
        <end position="24"/>
    </location>
</feature>
<feature type="transmembrane region" description="Helical" evidence="1">
    <location>
        <begin position="53"/>
        <end position="73"/>
    </location>
</feature>
<feature type="transmembrane region" description="Helical" evidence="1">
    <location>
        <begin position="80"/>
        <end position="100"/>
    </location>
</feature>
<feature type="transmembrane region" description="Helical" evidence="1">
    <location>
        <begin position="115"/>
        <end position="135"/>
    </location>
</feature>
<feature type="transmembrane region" description="Helical" evidence="1">
    <location>
        <begin position="138"/>
        <end position="158"/>
    </location>
</feature>
<proteinExistence type="inferred from homology"/>
<reference key="1">
    <citation type="journal article" date="2010" name="BMC Genomics">
        <title>A genomic perspective on the potential of Actinobacillus succinogenes for industrial succinate production.</title>
        <authorList>
            <person name="McKinlay J.B."/>
            <person name="Laivenieks M."/>
            <person name="Schindler B.D."/>
            <person name="McKinlay A.A."/>
            <person name="Siddaramappa S."/>
            <person name="Challacombe J.F."/>
            <person name="Lowry S.R."/>
            <person name="Clum A."/>
            <person name="Lapidus A.L."/>
            <person name="Burkhart K.B."/>
            <person name="Harkins V."/>
            <person name="Vieille C."/>
        </authorList>
    </citation>
    <scope>NUCLEOTIDE SEQUENCE [LARGE SCALE GENOMIC DNA]</scope>
    <source>
        <strain>ATCC 55618 / DSM 22257 / CCUG 43843 / 130Z</strain>
    </source>
</reference>
<evidence type="ECO:0000255" key="1">
    <source>
        <dbReference type="HAMAP-Rule" id="MF_01043"/>
    </source>
</evidence>
<comment type="function">
    <text evidence="1">Catalyzes the transfer of an acyl group from acyl-phosphate (acyl-PO(4)) to glycerol-3-phosphate (G3P) to form lysophosphatidic acid (LPA). This enzyme utilizes acyl-phosphate as fatty acyl donor, but not acyl-CoA or acyl-ACP.</text>
</comment>
<comment type="catalytic activity">
    <reaction evidence="1">
        <text>an acyl phosphate + sn-glycerol 3-phosphate = a 1-acyl-sn-glycero-3-phosphate + phosphate</text>
        <dbReference type="Rhea" id="RHEA:34075"/>
        <dbReference type="ChEBI" id="CHEBI:43474"/>
        <dbReference type="ChEBI" id="CHEBI:57597"/>
        <dbReference type="ChEBI" id="CHEBI:57970"/>
        <dbReference type="ChEBI" id="CHEBI:59918"/>
        <dbReference type="EC" id="2.3.1.275"/>
    </reaction>
</comment>
<comment type="pathway">
    <text evidence="1">Lipid metabolism; phospholipid metabolism.</text>
</comment>
<comment type="subunit">
    <text evidence="1">Probably interacts with PlsX.</text>
</comment>
<comment type="subcellular location">
    <subcellularLocation>
        <location evidence="1">Cell inner membrane</location>
        <topology evidence="1">Multi-pass membrane protein</topology>
    </subcellularLocation>
</comment>
<comment type="similarity">
    <text evidence="1">Belongs to the PlsY family.</text>
</comment>
<organism>
    <name type="scientific">Actinobacillus succinogenes (strain ATCC 55618 / DSM 22257 / CCUG 43843 / 130Z)</name>
    <dbReference type="NCBI Taxonomy" id="339671"/>
    <lineage>
        <taxon>Bacteria</taxon>
        <taxon>Pseudomonadati</taxon>
        <taxon>Pseudomonadota</taxon>
        <taxon>Gammaproteobacteria</taxon>
        <taxon>Pasteurellales</taxon>
        <taxon>Pasteurellaceae</taxon>
        <taxon>Actinobacillus</taxon>
    </lineage>
</organism>
<gene>
    <name evidence="1" type="primary">plsY</name>
    <name type="ordered locus">Asuc_1883</name>
</gene>
<protein>
    <recommendedName>
        <fullName evidence="1">Glycerol-3-phosphate acyltransferase</fullName>
    </recommendedName>
    <alternativeName>
        <fullName evidence="1">Acyl-PO4 G3P acyltransferase</fullName>
    </alternativeName>
    <alternativeName>
        <fullName evidence="1">Acyl-phosphate--glycerol-3-phosphate acyltransferase</fullName>
    </alternativeName>
    <alternativeName>
        <fullName evidence="1">G3P acyltransferase</fullName>
        <shortName evidence="1">GPAT</shortName>
        <ecNumber evidence="1">2.3.1.275</ecNumber>
    </alternativeName>
    <alternativeName>
        <fullName evidence="1">Lysophosphatidic acid synthase</fullName>
        <shortName evidence="1">LPA synthase</shortName>
    </alternativeName>
</protein>
<dbReference type="EC" id="2.3.1.275" evidence="1"/>
<dbReference type="EMBL" id="CP000746">
    <property type="protein sequence ID" value="ABR75232.1"/>
    <property type="molecule type" value="Genomic_DNA"/>
</dbReference>
<dbReference type="RefSeq" id="WP_012073609.1">
    <property type="nucleotide sequence ID" value="NC_009655.1"/>
</dbReference>
<dbReference type="SMR" id="A6VQI5"/>
<dbReference type="STRING" id="339671.Asuc_1883"/>
<dbReference type="KEGG" id="asu:Asuc_1883"/>
<dbReference type="eggNOG" id="COG0344">
    <property type="taxonomic scope" value="Bacteria"/>
</dbReference>
<dbReference type="HOGENOM" id="CLU_081254_0_2_6"/>
<dbReference type="OrthoDB" id="9777124at2"/>
<dbReference type="UniPathway" id="UPA00085"/>
<dbReference type="Proteomes" id="UP000001114">
    <property type="component" value="Chromosome"/>
</dbReference>
<dbReference type="GO" id="GO:0005886">
    <property type="term" value="C:plasma membrane"/>
    <property type="evidence" value="ECO:0007669"/>
    <property type="project" value="UniProtKB-SubCell"/>
</dbReference>
<dbReference type="GO" id="GO:0043772">
    <property type="term" value="F:acyl-phosphate glycerol-3-phosphate acyltransferase activity"/>
    <property type="evidence" value="ECO:0007669"/>
    <property type="project" value="UniProtKB-UniRule"/>
</dbReference>
<dbReference type="GO" id="GO:0008654">
    <property type="term" value="P:phospholipid biosynthetic process"/>
    <property type="evidence" value="ECO:0007669"/>
    <property type="project" value="UniProtKB-UniRule"/>
</dbReference>
<dbReference type="HAMAP" id="MF_01043">
    <property type="entry name" value="PlsY"/>
    <property type="match status" value="1"/>
</dbReference>
<dbReference type="InterPro" id="IPR003811">
    <property type="entry name" value="G3P_acylTferase_PlsY"/>
</dbReference>
<dbReference type="NCBIfam" id="TIGR00023">
    <property type="entry name" value="glycerol-3-phosphate 1-O-acyltransferase PlsY"/>
    <property type="match status" value="1"/>
</dbReference>
<dbReference type="PANTHER" id="PTHR30309:SF0">
    <property type="entry name" value="GLYCEROL-3-PHOSPHATE ACYLTRANSFERASE-RELATED"/>
    <property type="match status" value="1"/>
</dbReference>
<dbReference type="PANTHER" id="PTHR30309">
    <property type="entry name" value="INNER MEMBRANE PROTEIN YGIH"/>
    <property type="match status" value="1"/>
</dbReference>
<dbReference type="Pfam" id="PF02660">
    <property type="entry name" value="G3P_acyltransf"/>
    <property type="match status" value="1"/>
</dbReference>
<dbReference type="SMART" id="SM01207">
    <property type="entry name" value="G3P_acyltransf"/>
    <property type="match status" value="1"/>
</dbReference>
<sequence>MSLFALCYMFAAYLLGSISSAVIVCRLAGLPDPRRHGSHNPGATNVLRIGGRWAALAVFVFDVLKGMIPVWCGYYLGLTQFELGMVALGACLGHIFPIFFKFRGGKGVATAFGAIAPIGWGVMATMLGTWVLVFVISGYSSLSAVISALLVPLYVWWFRPEFTFPVALVCCLLVYRHHDNIQRLWRGQEDRIWGKKSNKK</sequence>
<accession>A6VQI5</accession>